<feature type="chain" id="PRO_0000384637" description="Ribosome maturation factor RimP">
    <location>
        <begin position="1"/>
        <end position="154"/>
    </location>
</feature>
<gene>
    <name evidence="1" type="primary">rimP</name>
    <name type="ordered locus">Deide_10390</name>
</gene>
<proteinExistence type="inferred from homology"/>
<organism>
    <name type="scientific">Deinococcus deserti (strain DSM 17065 / CIP 109153 / LMG 22923 / VCD115)</name>
    <dbReference type="NCBI Taxonomy" id="546414"/>
    <lineage>
        <taxon>Bacteria</taxon>
        <taxon>Thermotogati</taxon>
        <taxon>Deinococcota</taxon>
        <taxon>Deinococci</taxon>
        <taxon>Deinococcales</taxon>
        <taxon>Deinococcaceae</taxon>
        <taxon>Deinococcus</taxon>
    </lineage>
</organism>
<protein>
    <recommendedName>
        <fullName evidence="1">Ribosome maturation factor RimP</fullName>
    </recommendedName>
</protein>
<comment type="function">
    <text evidence="1">Required for maturation of 30S ribosomal subunits.</text>
</comment>
<comment type="subcellular location">
    <subcellularLocation>
        <location evidence="1">Cytoplasm</location>
    </subcellularLocation>
</comment>
<comment type="similarity">
    <text evidence="1">Belongs to the RimP family.</text>
</comment>
<evidence type="ECO:0000255" key="1">
    <source>
        <dbReference type="HAMAP-Rule" id="MF_01077"/>
    </source>
</evidence>
<accession>C1CUR2</accession>
<keyword id="KW-0963">Cytoplasm</keyword>
<keyword id="KW-1185">Reference proteome</keyword>
<keyword id="KW-0690">Ribosome biogenesis</keyword>
<sequence length="154" mass="16943">MNNNTTDNSTLQQIAHAAVEPLGFEVLEVQVQSQGGEKIVLVRVDRLDEQPVTMEDLTKASRAAEAEFDRLDPVAGEYRLEFESPGSKRPLTRARHFERMLGLKARVRGEGHAFTAPIKAVSGDQVTFDVSGQDVTVSASAVQANLAEFPDRHR</sequence>
<dbReference type="EMBL" id="CP001114">
    <property type="protein sequence ID" value="ACO45929.1"/>
    <property type="molecule type" value="Genomic_DNA"/>
</dbReference>
<dbReference type="RefSeq" id="WP_012693052.1">
    <property type="nucleotide sequence ID" value="NC_012526.1"/>
</dbReference>
<dbReference type="SMR" id="C1CUR2"/>
<dbReference type="STRING" id="546414.Deide_10390"/>
<dbReference type="PaxDb" id="546414-Deide_10390"/>
<dbReference type="KEGG" id="ddr:Deide_10390"/>
<dbReference type="eggNOG" id="COG0779">
    <property type="taxonomic scope" value="Bacteria"/>
</dbReference>
<dbReference type="HOGENOM" id="CLU_070525_1_1_0"/>
<dbReference type="OrthoDB" id="9805006at2"/>
<dbReference type="Proteomes" id="UP000002208">
    <property type="component" value="Chromosome"/>
</dbReference>
<dbReference type="GO" id="GO:0005829">
    <property type="term" value="C:cytosol"/>
    <property type="evidence" value="ECO:0007669"/>
    <property type="project" value="TreeGrafter"/>
</dbReference>
<dbReference type="GO" id="GO:0000028">
    <property type="term" value="P:ribosomal small subunit assembly"/>
    <property type="evidence" value="ECO:0007669"/>
    <property type="project" value="TreeGrafter"/>
</dbReference>
<dbReference type="GO" id="GO:0006412">
    <property type="term" value="P:translation"/>
    <property type="evidence" value="ECO:0007669"/>
    <property type="project" value="TreeGrafter"/>
</dbReference>
<dbReference type="Gene3D" id="3.30.300.70">
    <property type="entry name" value="RimP-like superfamily, N-terminal"/>
    <property type="match status" value="1"/>
</dbReference>
<dbReference type="HAMAP" id="MF_01077">
    <property type="entry name" value="RimP"/>
    <property type="match status" value="1"/>
</dbReference>
<dbReference type="InterPro" id="IPR003728">
    <property type="entry name" value="Ribosome_maturation_RimP"/>
</dbReference>
<dbReference type="InterPro" id="IPR028998">
    <property type="entry name" value="RimP_C"/>
</dbReference>
<dbReference type="InterPro" id="IPR028989">
    <property type="entry name" value="RimP_N"/>
</dbReference>
<dbReference type="InterPro" id="IPR035956">
    <property type="entry name" value="RimP_N_sf"/>
</dbReference>
<dbReference type="NCBIfam" id="NF011239">
    <property type="entry name" value="PRK14645.1"/>
    <property type="match status" value="1"/>
</dbReference>
<dbReference type="PANTHER" id="PTHR33867">
    <property type="entry name" value="RIBOSOME MATURATION FACTOR RIMP"/>
    <property type="match status" value="1"/>
</dbReference>
<dbReference type="PANTHER" id="PTHR33867:SF1">
    <property type="entry name" value="RIBOSOME MATURATION FACTOR RIMP"/>
    <property type="match status" value="1"/>
</dbReference>
<dbReference type="Pfam" id="PF17384">
    <property type="entry name" value="DUF150_C"/>
    <property type="match status" value="1"/>
</dbReference>
<dbReference type="Pfam" id="PF02576">
    <property type="entry name" value="RimP_N"/>
    <property type="match status" value="1"/>
</dbReference>
<dbReference type="SUPFAM" id="SSF75420">
    <property type="entry name" value="YhbC-like, N-terminal domain"/>
    <property type="match status" value="1"/>
</dbReference>
<name>RIMP_DEIDV</name>
<reference key="1">
    <citation type="journal article" date="2009" name="PLoS Genet.">
        <title>Alliance of proteomics and genomics to unravel the specificities of Sahara bacterium Deinococcus deserti.</title>
        <authorList>
            <person name="de Groot A."/>
            <person name="Dulermo R."/>
            <person name="Ortet P."/>
            <person name="Blanchard L."/>
            <person name="Guerin P."/>
            <person name="Fernandez B."/>
            <person name="Vacherie B."/>
            <person name="Dossat C."/>
            <person name="Jolivet E."/>
            <person name="Siguier P."/>
            <person name="Chandler M."/>
            <person name="Barakat M."/>
            <person name="Dedieu A."/>
            <person name="Barbe V."/>
            <person name="Heulin T."/>
            <person name="Sommer S."/>
            <person name="Achouak W."/>
            <person name="Armengaud J."/>
        </authorList>
    </citation>
    <scope>NUCLEOTIDE SEQUENCE [LARGE SCALE GENOMIC DNA]</scope>
    <source>
        <strain>DSM 17065 / CIP 109153 / LMG 22923 / VCD115</strain>
    </source>
</reference>